<dbReference type="EMBL" id="AC156550">
    <property type="status" value="NOT_ANNOTATED_CDS"/>
    <property type="molecule type" value="Genomic_DNA"/>
</dbReference>
<dbReference type="EMBL" id="AC157566">
    <property type="status" value="NOT_ANNOTATED_CDS"/>
    <property type="molecule type" value="Genomic_DNA"/>
</dbReference>
<dbReference type="EMBL" id="BC066068">
    <property type="protein sequence ID" value="AAH66068.1"/>
    <property type="status" value="ALT_INIT"/>
    <property type="molecule type" value="mRNA"/>
</dbReference>
<dbReference type="EMBL" id="AJ294539">
    <property type="protein sequence ID" value="CAC08218.1"/>
    <property type="status" value="ALT_SEQ"/>
    <property type="molecule type" value="Genomic_DNA"/>
</dbReference>
<dbReference type="EMBL" id="AK013272">
    <property type="protein sequence ID" value="BAC25399.1"/>
    <property type="status" value="ALT_INIT"/>
    <property type="molecule type" value="mRNA"/>
</dbReference>
<dbReference type="CCDS" id="CCDS27580.2"/>
<dbReference type="RefSeq" id="NP_898914.3">
    <property type="nucleotide sequence ID" value="NM_183091.3"/>
</dbReference>
<dbReference type="SMR" id="Q6NZL6"/>
<dbReference type="FunCoup" id="Q6NZL6">
    <property type="interactions" value="874"/>
</dbReference>
<dbReference type="STRING" id="10090.ENSMUSP00000129597"/>
<dbReference type="iPTMnet" id="Q6NZL6"/>
<dbReference type="PhosphoSitePlus" id="Q6NZL6"/>
<dbReference type="PaxDb" id="10090-ENSMUSP00000129597"/>
<dbReference type="PeptideAtlas" id="Q6NZL6"/>
<dbReference type="ProteomicsDB" id="259497"/>
<dbReference type="Pumba" id="Q6NZL6"/>
<dbReference type="DNASU" id="72749"/>
<dbReference type="GeneID" id="72749"/>
<dbReference type="KEGG" id="mmu:72749"/>
<dbReference type="AGR" id="MGI:1919999"/>
<dbReference type="CTD" id="4796"/>
<dbReference type="MGI" id="MGI:1919999">
    <property type="gene designation" value="Tonsl"/>
</dbReference>
<dbReference type="eggNOG" id="KOG0504">
    <property type="taxonomic scope" value="Eukaryota"/>
</dbReference>
<dbReference type="eggNOG" id="KOG4308">
    <property type="taxonomic scope" value="Eukaryota"/>
</dbReference>
<dbReference type="InParanoid" id="Q6NZL6"/>
<dbReference type="OrthoDB" id="5806726at2759"/>
<dbReference type="PhylomeDB" id="Q6NZL6"/>
<dbReference type="BioGRID-ORCS" id="72749">
    <property type="hits" value="39 hits in 115 CRISPR screens"/>
</dbReference>
<dbReference type="PRO" id="PR:Q6NZL6"/>
<dbReference type="Proteomes" id="UP000000589">
    <property type="component" value="Unplaced"/>
</dbReference>
<dbReference type="RNAct" id="Q6NZL6">
    <property type="molecule type" value="protein"/>
</dbReference>
<dbReference type="GO" id="GO:0005737">
    <property type="term" value="C:cytoplasm"/>
    <property type="evidence" value="ECO:0007669"/>
    <property type="project" value="UniProtKB-SubCell"/>
</dbReference>
<dbReference type="GO" id="GO:0043596">
    <property type="term" value="C:nuclear replication fork"/>
    <property type="evidence" value="ECO:0000250"/>
    <property type="project" value="UniProtKB"/>
</dbReference>
<dbReference type="GO" id="GO:0035861">
    <property type="term" value="C:site of double-strand break"/>
    <property type="evidence" value="ECO:0000250"/>
    <property type="project" value="UniProtKB"/>
</dbReference>
<dbReference type="GO" id="GO:0042393">
    <property type="term" value="F:histone binding"/>
    <property type="evidence" value="ECO:0000250"/>
    <property type="project" value="UniProtKB"/>
</dbReference>
<dbReference type="GO" id="GO:0140566">
    <property type="term" value="F:histone reader activity"/>
    <property type="evidence" value="ECO:0000250"/>
    <property type="project" value="UniProtKB"/>
</dbReference>
<dbReference type="GO" id="GO:0000724">
    <property type="term" value="P:double-strand break repair via homologous recombination"/>
    <property type="evidence" value="ECO:0000250"/>
    <property type="project" value="UniProtKB"/>
</dbReference>
<dbReference type="GO" id="GO:0031297">
    <property type="term" value="P:replication fork processing"/>
    <property type="evidence" value="ECO:0000250"/>
    <property type="project" value="UniProtKB"/>
</dbReference>
<dbReference type="FunFam" id="1.25.40.10:FF:001196">
    <property type="entry name" value="Tonsoku like, DNA repair protein"/>
    <property type="match status" value="1"/>
</dbReference>
<dbReference type="FunFam" id="1.25.40.20:FF:000151">
    <property type="entry name" value="Tonsoku like, DNA repair protein"/>
    <property type="match status" value="1"/>
</dbReference>
<dbReference type="FunFam" id="1.25.40.10:FF:000297">
    <property type="entry name" value="tonsoku-like protein isoform X2"/>
    <property type="match status" value="1"/>
</dbReference>
<dbReference type="Gene3D" id="1.25.40.20">
    <property type="entry name" value="Ankyrin repeat-containing domain"/>
    <property type="match status" value="1"/>
</dbReference>
<dbReference type="Gene3D" id="3.80.10.10">
    <property type="entry name" value="Ribonuclease Inhibitor"/>
    <property type="match status" value="2"/>
</dbReference>
<dbReference type="Gene3D" id="1.25.40.10">
    <property type="entry name" value="Tetratricopeptide repeat domain"/>
    <property type="match status" value="2"/>
</dbReference>
<dbReference type="InterPro" id="IPR002110">
    <property type="entry name" value="Ankyrin_rpt"/>
</dbReference>
<dbReference type="InterPro" id="IPR036770">
    <property type="entry name" value="Ankyrin_rpt-contain_sf"/>
</dbReference>
<dbReference type="InterPro" id="IPR001611">
    <property type="entry name" value="Leu-rich_rpt"/>
</dbReference>
<dbReference type="InterPro" id="IPR032675">
    <property type="entry name" value="LRR_dom_sf"/>
</dbReference>
<dbReference type="InterPro" id="IPR052311">
    <property type="entry name" value="MMS22L-TONSL_complex_comp"/>
</dbReference>
<dbReference type="InterPro" id="IPR011990">
    <property type="entry name" value="TPR-like_helical_dom_sf"/>
</dbReference>
<dbReference type="InterPro" id="IPR019734">
    <property type="entry name" value="TPR_rpt"/>
</dbReference>
<dbReference type="PANTHER" id="PTHR46358">
    <property type="entry name" value="TONSOKU-LIKE PROTEIN"/>
    <property type="match status" value="1"/>
</dbReference>
<dbReference type="PANTHER" id="PTHR46358:SF1">
    <property type="entry name" value="TONSOKU-LIKE PROTEIN"/>
    <property type="match status" value="1"/>
</dbReference>
<dbReference type="Pfam" id="PF12796">
    <property type="entry name" value="Ank_2"/>
    <property type="match status" value="1"/>
</dbReference>
<dbReference type="Pfam" id="PF13516">
    <property type="entry name" value="LRR_6"/>
    <property type="match status" value="2"/>
</dbReference>
<dbReference type="PRINTS" id="PR01415">
    <property type="entry name" value="ANKYRIN"/>
</dbReference>
<dbReference type="SMART" id="SM00248">
    <property type="entry name" value="ANK"/>
    <property type="match status" value="3"/>
</dbReference>
<dbReference type="SMART" id="SM00368">
    <property type="entry name" value="LRR_RI"/>
    <property type="match status" value="6"/>
</dbReference>
<dbReference type="SMART" id="SM00028">
    <property type="entry name" value="TPR"/>
    <property type="match status" value="5"/>
</dbReference>
<dbReference type="SUPFAM" id="SSF48403">
    <property type="entry name" value="Ankyrin repeat"/>
    <property type="match status" value="1"/>
</dbReference>
<dbReference type="SUPFAM" id="SSF52047">
    <property type="entry name" value="RNI-like"/>
    <property type="match status" value="1"/>
</dbReference>
<dbReference type="SUPFAM" id="SSF48452">
    <property type="entry name" value="TPR-like"/>
    <property type="match status" value="3"/>
</dbReference>
<dbReference type="PROSITE" id="PS50297">
    <property type="entry name" value="ANK_REP_REGION"/>
    <property type="match status" value="1"/>
</dbReference>
<dbReference type="PROSITE" id="PS50088">
    <property type="entry name" value="ANK_REPEAT"/>
    <property type="match status" value="3"/>
</dbReference>
<dbReference type="PROSITE" id="PS50293">
    <property type="entry name" value="TPR_REGION"/>
    <property type="match status" value="1"/>
</dbReference>
<accession>Q6NZL6</accession>
<accession>Q8BT74</accession>
<accession>Q9ER45</accession>
<sequence length="1363" mass="151108">MTLEQELRQLSKAKTRAQRNGQLREEAAYCHQLGELLASHGRFKDALEEHQQELHLLESVQDTLGCAVAHRKIGERLAEMENYSAALKHQHLYLDLAGSLSNHTELQRAWATIGRTHLDIYDHCQSRDSLLQAQAAFEKSLAIVDEKLEGMLTQRELSEMRTRLYLNLGLTCESLQQTALCNNYFKKSIFLAEQNHLYEDLFRARYNLGAIHWRGGQHSQAMRCLEGARECARAMKMRFMESECCVLVSQVLQDLGDFLAAKRALKKAYRLGSQKPNQRVTVCQSLKYVLAVIQLQQQLEEAEGNDLQGAMAICEQLGDLFSKAGDFPKAAEAYQKQLHLAELLNRPDLELAVIHVSLATTLGDMKDHRKAVHHYEEELRLRKGNALEEAKTWFNIALSREEAGDAYELLAPCFQKAFCCAQQAQRFQLQRQILQHLYTVQLKLQPQEARDTEIRLQELSMAKDTEEEEEEEEEEEEEASEAPETSELELSESEDDADGLSQQLEEDEELQGCVGRRKVNKWNRRNDMGETLLHRACIEGQLRRVQDLVKQGHPLNPRDYCGWTPLHEACNYGHLEIVRFLLDHGAAVDDPGGQGCDGITPLHDALNCGHFEVAELLIERGASVTLRTRKGLSPLETLQQWVKLYFRDLDLETRQKAATMEERLQMASSGQASRSSPALQTIPSNHLFDPETSPPSSPCPEPSSYTPRPPEASPAPAKVFLEETVSAVSRPRKTRHRPTSSSSSSEDEDNPSPCRPSQKRLRHTTQQGEVKIPDPPKSRETATSSACRAAYQAAIRGVGSAQSRRLVPSLPRGSEEVPAPKTALIPEEEYLAGEWLEVDTPLTRSGRPSTSVSDYERCPARPRTRVKQSRLTSLDGWCARTQAGDGSLNAEPAENPSVPRTSGPNKENYAAGQPLLLVQPPPIRVRVQIQDNLFLIPVPQSDIRPVAWLTEQAAQRYFQTCGLLPRLTLRKDGALLAPQDPIPDVLQSNDEVLAEVTSWDLPPLKDRYRRACLSLGQGEHQQVLHAMDHQSSSPSFSACSLALCQAQLTPLLRALKLHTALRELRLAGNRLGDACATELLATLGTTPNLVLLDLSSNHLGQEGLRQLVEGSSGQAALQNLEELDLSMNPLGDGCGQALASLLRACPMLSTLRLQACGFSSSFFLSHQAALGGAFQDAVHLKTLSLSYNLLGAPALARVLQTLPACTLKRLDLSSVAASKSNSGIIEPVIKYLTKEGCALAHLTLSANCLGDKAVRELSRCLPCCPSLTSLDLSANPEVSCASLEELLSALQERSQGLSFLGLSGCSIQGPLNSDLWDKIFVQLQELQLCTKDLSTKDRDSVCQRLPEGACTMDQSSKLFFKCL</sequence>
<gene>
    <name evidence="5 7" type="primary">Tonsl</name>
    <name type="synonym">Ikbr</name>
    <name type="synonym">Nfkbil2</name>
</gene>
<proteinExistence type="evidence at protein level"/>
<keyword id="KW-0040">ANK repeat</keyword>
<keyword id="KW-0156">Chromatin regulator</keyword>
<keyword id="KW-0158">Chromosome</keyword>
<keyword id="KW-0963">Cytoplasm</keyword>
<keyword id="KW-0227">DNA damage</keyword>
<keyword id="KW-0234">DNA repair</keyword>
<keyword id="KW-0433">Leucine-rich repeat</keyword>
<keyword id="KW-0488">Methylation</keyword>
<keyword id="KW-0539">Nucleus</keyword>
<keyword id="KW-1185">Reference proteome</keyword>
<keyword id="KW-0677">Repeat</keyword>
<keyword id="KW-0802">TPR repeat</keyword>
<organism>
    <name type="scientific">Mus musculus</name>
    <name type="common">Mouse</name>
    <dbReference type="NCBI Taxonomy" id="10090"/>
    <lineage>
        <taxon>Eukaryota</taxon>
        <taxon>Metazoa</taxon>
        <taxon>Chordata</taxon>
        <taxon>Craniata</taxon>
        <taxon>Vertebrata</taxon>
        <taxon>Euteleostomi</taxon>
        <taxon>Mammalia</taxon>
        <taxon>Eutheria</taxon>
        <taxon>Euarchontoglires</taxon>
        <taxon>Glires</taxon>
        <taxon>Rodentia</taxon>
        <taxon>Myomorpha</taxon>
        <taxon>Muroidea</taxon>
        <taxon>Muridae</taxon>
        <taxon>Murinae</taxon>
        <taxon>Mus</taxon>
        <taxon>Mus</taxon>
    </lineage>
</organism>
<evidence type="ECO:0000250" key="1">
    <source>
        <dbReference type="UniProtKB" id="Q96HA7"/>
    </source>
</evidence>
<evidence type="ECO:0000256" key="2">
    <source>
        <dbReference type="SAM" id="MobiDB-lite"/>
    </source>
</evidence>
<evidence type="ECO:0000269" key="3">
    <source>
    </source>
</evidence>
<evidence type="ECO:0000269" key="4">
    <source>
    </source>
</evidence>
<evidence type="ECO:0000303" key="5">
    <source>
    </source>
</evidence>
<evidence type="ECO:0000305" key="6"/>
<evidence type="ECO:0000312" key="7">
    <source>
        <dbReference type="MGI" id="MGI:1919999"/>
    </source>
</evidence>
<evidence type="ECO:0007744" key="8">
    <source>
    </source>
</evidence>
<feature type="chain" id="PRO_0000326635" description="Tonsoku-like protein">
    <location>
        <begin position="1"/>
        <end position="1363"/>
    </location>
</feature>
<feature type="repeat" description="TPR 1">
    <location>
        <begin position="27"/>
        <end position="60"/>
    </location>
</feature>
<feature type="repeat" description="TPR 2">
    <location>
        <begin position="67"/>
        <end position="100"/>
    </location>
</feature>
<feature type="repeat" description="TPR 3">
    <location>
        <begin position="107"/>
        <end position="147"/>
    </location>
</feature>
<feature type="repeat" description="TPR 4">
    <location>
        <begin position="162"/>
        <end position="195"/>
    </location>
</feature>
<feature type="repeat" description="TPR 5">
    <location>
        <begin position="202"/>
        <end position="235"/>
    </location>
</feature>
<feature type="repeat" description="TPR 6">
    <location>
        <begin position="242"/>
        <end position="275"/>
    </location>
</feature>
<feature type="repeat" description="TPR 7">
    <location>
        <begin position="311"/>
        <end position="344"/>
    </location>
</feature>
<feature type="repeat" description="TPR 8">
    <location>
        <begin position="352"/>
        <end position="385"/>
    </location>
</feature>
<feature type="repeat" description="ANK 1">
    <location>
        <begin position="528"/>
        <end position="557"/>
    </location>
</feature>
<feature type="repeat" description="ANK 2">
    <location>
        <begin position="561"/>
        <end position="590"/>
    </location>
</feature>
<feature type="repeat" description="ANK 3">
    <location>
        <begin position="597"/>
        <end position="626"/>
    </location>
</feature>
<feature type="repeat" description="LRR 1">
    <location>
        <begin position="1060"/>
        <end position="1081"/>
    </location>
</feature>
<feature type="repeat" description="LRR 2">
    <location>
        <begin position="1088"/>
        <end position="1108"/>
    </location>
</feature>
<feature type="repeat" description="LRR 3">
    <location>
        <begin position="1119"/>
        <end position="1140"/>
    </location>
</feature>
<feature type="repeat" description="LRR 4">
    <location>
        <begin position="1147"/>
        <end position="1168"/>
    </location>
</feature>
<feature type="repeat" description="LRR 5">
    <location>
        <begin position="1179"/>
        <end position="1199"/>
    </location>
</feature>
<feature type="repeat" description="LRR 6">
    <location>
        <begin position="1206"/>
        <end position="1214"/>
    </location>
</feature>
<feature type="repeat" description="LRR 7">
    <location>
        <begin position="1238"/>
        <end position="1261"/>
    </location>
</feature>
<feature type="repeat" description="LRR 8">
    <location>
        <begin position="1266"/>
        <end position="1287"/>
    </location>
</feature>
<feature type="repeat" description="LRR 9">
    <location>
        <begin position="1296"/>
        <end position="1317"/>
    </location>
</feature>
<feature type="repeat" description="LRR 10">
    <location>
        <begin position="1322"/>
        <end position="1343"/>
    </location>
</feature>
<feature type="region of interest" description="Disordered" evidence="2">
    <location>
        <begin position="460"/>
        <end position="511"/>
    </location>
</feature>
<feature type="region of interest" description="Disordered" evidence="2">
    <location>
        <begin position="662"/>
        <end position="786"/>
    </location>
</feature>
<feature type="region of interest" description="Disordered" evidence="2">
    <location>
        <begin position="841"/>
        <end position="866"/>
    </location>
</feature>
<feature type="region of interest" description="Disordered" evidence="2">
    <location>
        <begin position="883"/>
        <end position="909"/>
    </location>
</feature>
<feature type="compositionally biased region" description="Acidic residues" evidence="2">
    <location>
        <begin position="465"/>
        <end position="510"/>
    </location>
</feature>
<feature type="compositionally biased region" description="Polar residues" evidence="2">
    <location>
        <begin position="666"/>
        <end position="684"/>
    </location>
</feature>
<feature type="compositionally biased region" description="Pro residues" evidence="2">
    <location>
        <begin position="692"/>
        <end position="713"/>
    </location>
</feature>
<feature type="compositionally biased region" description="Basic and acidic residues" evidence="2">
    <location>
        <begin position="771"/>
        <end position="780"/>
    </location>
</feature>
<feature type="compositionally biased region" description="Polar residues" evidence="2">
    <location>
        <begin position="842"/>
        <end position="853"/>
    </location>
</feature>
<feature type="modified residue" description="Omega-N-methylarginine" evidence="8">
    <location>
        <position position="796"/>
    </location>
</feature>
<feature type="mutagenesis site" description="Homozygous mice are not viable. Embryos show early lethality along with fetal growth restriction and lack of visible blood vessels in yolk sacs." evidence="3">
    <original>R</original>
    <variation>W</variation>
    <location>
        <position position="924"/>
    </location>
</feature>
<feature type="sequence conflict" description="In Ref. 3; CAC08218." evidence="6" ref="3">
    <original>IQ</original>
    <variation>NR</variation>
    <location>
        <begin position="293"/>
        <end position="294"/>
    </location>
</feature>
<feature type="sequence conflict" description="In Ref. 4; BAC25399." evidence="6" ref="4">
    <original>QL</original>
    <variation>HV</variation>
    <location>
        <begin position="1106"/>
        <end position="1107"/>
    </location>
</feature>
<protein>
    <recommendedName>
        <fullName evidence="5">Tonsoku-like protein</fullName>
    </recommendedName>
    <alternativeName>
        <fullName>Inhibitor of kappa B-related protein</fullName>
        <shortName>I-kappa-B-related protein</shortName>
        <shortName>IkappaBR</shortName>
    </alternativeName>
    <alternativeName>
        <fullName>NF-kappa-B inhibitor-like protein 2</fullName>
    </alternativeName>
    <alternativeName>
        <fullName>Nuclear factor of kappa light polypeptide gene enhancer in B-cells inhibitor-like 2</fullName>
    </alternativeName>
</protein>
<name>TONSL_MOUSE</name>
<comment type="function">
    <text evidence="1">Component of the MMS22L-TONSL complex, a complex that promotes homologous recombination-mediated repair of double-strand breaks (DSBs) at stalled or collapsed replication forks. The MMS22L-TONSL complex is required to maintain genome integrity during DNA replication. It mediates the assembly of RAD51 filaments on single-stranded DNA (ssDNA): the MMS22L-TONSL complex is recruited to DSBs following histone replacement by histone chaperones and eviction of the replication protein A complex (RPA/RP-A) from DSBs. Following recruitment to DSBs, the TONSL-MMS22L complex promotes recruitment of RAD51 filaments and subsequent homologous recombination. Within the complex, TONSL acts as a histone reader, which recognizes and binds newly synthesized histones following their replacement by histone chaperones. Specifically binds histone H4 lacking methylation at 'Lys-20' (H4K20me0) and histone H3.1.</text>
</comment>
<comment type="subunit">
    <text evidence="1 4">Component of the MMS22L-TONSL complex, a complex at least composed of MMS22L and TONSL/NFKBIL2 (By similarity). Interacts with the MCM complex, the FACT complex and the RPA complex (By similarity). Interacts with MCM5; the interaction is direct (By similarity). Binds histones, with a strong preference for histone H3.1 (histones H3.1 and H3-4/H3.1t) (PubMed:35298257). Interacts (via ANK repeats) with histone H4; specifically binds histone H4 lacking methylation at 'Lys-20' (H4K20me0) (By similarity). May interact with DNAJC9; the interaction seems to be histone-dependent (By similarity).</text>
</comment>
<comment type="subcellular location">
    <subcellularLocation>
        <location evidence="1">Nucleus</location>
    </subcellularLocation>
    <subcellularLocation>
        <location evidence="1">Chromosome</location>
    </subcellularLocation>
    <subcellularLocation>
        <location evidence="1">Cytoplasm</location>
    </subcellularLocation>
    <text evidence="1">Mainly nuclear. Localizes to DNA damage sites, accumulates at stressed replication forks. Recruited to stalled or collapsed replication forks following histone replacement by histone chaperones ASF1A and the CAF-1 complex: TONSL acts as a histone reader that recognizes and binds newly synthesized histones.</text>
</comment>
<comment type="domain">
    <text evidence="1">The ANK repeats mediate the interaction with the MCM complex and histones, while the LRR repeats mediate the interaction with MMS22L.</text>
</comment>
<comment type="similarity">
    <text evidence="6">Belongs to the Tonsoku family.</text>
</comment>
<comment type="sequence caution" evidence="6">
    <conflict type="erroneous initiation">
        <sequence resource="EMBL-CDS" id="AAH66068"/>
    </conflict>
    <text>Truncated N-terminus.</text>
</comment>
<comment type="sequence caution" evidence="6">
    <conflict type="erroneous initiation">
        <sequence resource="EMBL-CDS" id="BAC25399"/>
    </conflict>
    <text>Truncated N-terminus.</text>
</comment>
<comment type="sequence caution" evidence="6">
    <conflict type="erroneous gene model prediction">
        <sequence resource="EMBL-CDS" id="CAC08218"/>
    </conflict>
</comment>
<reference key="1">
    <citation type="journal article" date="2009" name="PLoS Biol.">
        <title>Lineage-specific biology revealed by a finished genome assembly of the mouse.</title>
        <authorList>
            <person name="Church D.M."/>
            <person name="Goodstadt L."/>
            <person name="Hillier L.W."/>
            <person name="Zody M.C."/>
            <person name="Goldstein S."/>
            <person name="She X."/>
            <person name="Bult C.J."/>
            <person name="Agarwala R."/>
            <person name="Cherry J.L."/>
            <person name="DiCuccio M."/>
            <person name="Hlavina W."/>
            <person name="Kapustin Y."/>
            <person name="Meric P."/>
            <person name="Maglott D."/>
            <person name="Birtle Z."/>
            <person name="Marques A.C."/>
            <person name="Graves T."/>
            <person name="Zhou S."/>
            <person name="Teague B."/>
            <person name="Potamousis K."/>
            <person name="Churas C."/>
            <person name="Place M."/>
            <person name="Herschleb J."/>
            <person name="Runnheim R."/>
            <person name="Forrest D."/>
            <person name="Amos-Landgraf J."/>
            <person name="Schwartz D.C."/>
            <person name="Cheng Z."/>
            <person name="Lindblad-Toh K."/>
            <person name="Eichler E.E."/>
            <person name="Ponting C.P."/>
        </authorList>
    </citation>
    <scope>NUCLEOTIDE SEQUENCE [LARGE SCALE GENOMIC DNA]</scope>
    <source>
        <strain>C57BL/6J</strain>
    </source>
</reference>
<reference key="2">
    <citation type="journal article" date="2004" name="Genome Res.">
        <title>The status, quality, and expansion of the NIH full-length cDNA project: the Mammalian Gene Collection (MGC).</title>
        <authorList>
            <consortium name="The MGC Project Team"/>
        </authorList>
    </citation>
    <scope>NUCLEOTIDE SEQUENCE [LARGE SCALE MRNA]</scope>
    <source>
        <strain>C57BL/6J</strain>
        <tissue>Brain</tissue>
    </source>
</reference>
<reference key="3">
    <citation type="submission" date="2000-09" db="EMBL/GenBank/DDBJ databases">
        <title>Studies of NF-kappaB and a related protein, IkappaBR, in cardiac myocytes.</title>
        <authorList>
            <person name="Norman D.A.M."/>
        </authorList>
    </citation>
    <scope>NUCLEOTIDE SEQUENCE [GENOMIC DNA] OF 88-487</scope>
</reference>
<reference key="4">
    <citation type="journal article" date="2005" name="Science">
        <title>The transcriptional landscape of the mammalian genome.</title>
        <authorList>
            <person name="Carninci P."/>
            <person name="Kasukawa T."/>
            <person name="Katayama S."/>
            <person name="Gough J."/>
            <person name="Frith M.C."/>
            <person name="Maeda N."/>
            <person name="Oyama R."/>
            <person name="Ravasi T."/>
            <person name="Lenhard B."/>
            <person name="Wells C."/>
            <person name="Kodzius R."/>
            <person name="Shimokawa K."/>
            <person name="Bajic V.B."/>
            <person name="Brenner S.E."/>
            <person name="Batalov S."/>
            <person name="Forrest A.R."/>
            <person name="Zavolan M."/>
            <person name="Davis M.J."/>
            <person name="Wilming L.G."/>
            <person name="Aidinis V."/>
            <person name="Allen J.E."/>
            <person name="Ambesi-Impiombato A."/>
            <person name="Apweiler R."/>
            <person name="Aturaliya R.N."/>
            <person name="Bailey T.L."/>
            <person name="Bansal M."/>
            <person name="Baxter L."/>
            <person name="Beisel K.W."/>
            <person name="Bersano T."/>
            <person name="Bono H."/>
            <person name="Chalk A.M."/>
            <person name="Chiu K.P."/>
            <person name="Choudhary V."/>
            <person name="Christoffels A."/>
            <person name="Clutterbuck D.R."/>
            <person name="Crowe M.L."/>
            <person name="Dalla E."/>
            <person name="Dalrymple B.P."/>
            <person name="de Bono B."/>
            <person name="Della Gatta G."/>
            <person name="di Bernardo D."/>
            <person name="Down T."/>
            <person name="Engstrom P."/>
            <person name="Fagiolini M."/>
            <person name="Faulkner G."/>
            <person name="Fletcher C.F."/>
            <person name="Fukushima T."/>
            <person name="Furuno M."/>
            <person name="Futaki S."/>
            <person name="Gariboldi M."/>
            <person name="Georgii-Hemming P."/>
            <person name="Gingeras T.R."/>
            <person name="Gojobori T."/>
            <person name="Green R.E."/>
            <person name="Gustincich S."/>
            <person name="Harbers M."/>
            <person name="Hayashi Y."/>
            <person name="Hensch T.K."/>
            <person name="Hirokawa N."/>
            <person name="Hill D."/>
            <person name="Huminiecki L."/>
            <person name="Iacono M."/>
            <person name="Ikeo K."/>
            <person name="Iwama A."/>
            <person name="Ishikawa T."/>
            <person name="Jakt M."/>
            <person name="Kanapin A."/>
            <person name="Katoh M."/>
            <person name="Kawasawa Y."/>
            <person name="Kelso J."/>
            <person name="Kitamura H."/>
            <person name="Kitano H."/>
            <person name="Kollias G."/>
            <person name="Krishnan S.P."/>
            <person name="Kruger A."/>
            <person name="Kummerfeld S.K."/>
            <person name="Kurochkin I.V."/>
            <person name="Lareau L.F."/>
            <person name="Lazarevic D."/>
            <person name="Lipovich L."/>
            <person name="Liu J."/>
            <person name="Liuni S."/>
            <person name="McWilliam S."/>
            <person name="Madan Babu M."/>
            <person name="Madera M."/>
            <person name="Marchionni L."/>
            <person name="Matsuda H."/>
            <person name="Matsuzawa S."/>
            <person name="Miki H."/>
            <person name="Mignone F."/>
            <person name="Miyake S."/>
            <person name="Morris K."/>
            <person name="Mottagui-Tabar S."/>
            <person name="Mulder N."/>
            <person name="Nakano N."/>
            <person name="Nakauchi H."/>
            <person name="Ng P."/>
            <person name="Nilsson R."/>
            <person name="Nishiguchi S."/>
            <person name="Nishikawa S."/>
            <person name="Nori F."/>
            <person name="Ohara O."/>
            <person name="Okazaki Y."/>
            <person name="Orlando V."/>
            <person name="Pang K.C."/>
            <person name="Pavan W.J."/>
            <person name="Pavesi G."/>
            <person name="Pesole G."/>
            <person name="Petrovsky N."/>
            <person name="Piazza S."/>
            <person name="Reed J."/>
            <person name="Reid J.F."/>
            <person name="Ring B.Z."/>
            <person name="Ringwald M."/>
            <person name="Rost B."/>
            <person name="Ruan Y."/>
            <person name="Salzberg S.L."/>
            <person name="Sandelin A."/>
            <person name="Schneider C."/>
            <person name="Schoenbach C."/>
            <person name="Sekiguchi K."/>
            <person name="Semple C.A."/>
            <person name="Seno S."/>
            <person name="Sessa L."/>
            <person name="Sheng Y."/>
            <person name="Shibata Y."/>
            <person name="Shimada H."/>
            <person name="Shimada K."/>
            <person name="Silva D."/>
            <person name="Sinclair B."/>
            <person name="Sperling S."/>
            <person name="Stupka E."/>
            <person name="Sugiura K."/>
            <person name="Sultana R."/>
            <person name="Takenaka Y."/>
            <person name="Taki K."/>
            <person name="Tammoja K."/>
            <person name="Tan S.L."/>
            <person name="Tang S."/>
            <person name="Taylor M.S."/>
            <person name="Tegner J."/>
            <person name="Teichmann S.A."/>
            <person name="Ueda H.R."/>
            <person name="van Nimwegen E."/>
            <person name="Verardo R."/>
            <person name="Wei C.L."/>
            <person name="Yagi K."/>
            <person name="Yamanishi H."/>
            <person name="Zabarovsky E."/>
            <person name="Zhu S."/>
            <person name="Zimmer A."/>
            <person name="Hide W."/>
            <person name="Bult C."/>
            <person name="Grimmond S.M."/>
            <person name="Teasdale R.D."/>
            <person name="Liu E.T."/>
            <person name="Brusic V."/>
            <person name="Quackenbush J."/>
            <person name="Wahlestedt C."/>
            <person name="Mattick J.S."/>
            <person name="Hume D.A."/>
            <person name="Kai C."/>
            <person name="Sasaki D."/>
            <person name="Tomaru Y."/>
            <person name="Fukuda S."/>
            <person name="Kanamori-Katayama M."/>
            <person name="Suzuki M."/>
            <person name="Aoki J."/>
            <person name="Arakawa T."/>
            <person name="Iida J."/>
            <person name="Imamura K."/>
            <person name="Itoh M."/>
            <person name="Kato T."/>
            <person name="Kawaji H."/>
            <person name="Kawagashira N."/>
            <person name="Kawashima T."/>
            <person name="Kojima M."/>
            <person name="Kondo S."/>
            <person name="Konno H."/>
            <person name="Nakano K."/>
            <person name="Ninomiya N."/>
            <person name="Nishio T."/>
            <person name="Okada M."/>
            <person name="Plessy C."/>
            <person name="Shibata K."/>
            <person name="Shiraki T."/>
            <person name="Suzuki S."/>
            <person name="Tagami M."/>
            <person name="Waki K."/>
            <person name="Watahiki A."/>
            <person name="Okamura-Oho Y."/>
            <person name="Suzuki H."/>
            <person name="Kawai J."/>
            <person name="Hayashizaki Y."/>
        </authorList>
    </citation>
    <scope>NUCLEOTIDE SEQUENCE [LARGE SCALE MRNA] OF 1052-1363</scope>
    <source>
        <strain>C57BL/6J</strain>
        <tissue>Embryo</tissue>
    </source>
</reference>
<reference key="5">
    <citation type="journal article" date="2010" name="Cell">
        <title>A tissue-specific atlas of mouse protein phosphorylation and expression.</title>
        <authorList>
            <person name="Huttlin E.L."/>
            <person name="Jedrychowski M.P."/>
            <person name="Elias J.E."/>
            <person name="Goswami T."/>
            <person name="Rad R."/>
            <person name="Beausoleil S.A."/>
            <person name="Villen J."/>
            <person name="Haas W."/>
            <person name="Sowa M.E."/>
            <person name="Gygi S.P."/>
        </authorList>
    </citation>
    <scope>IDENTIFICATION BY MASS SPECTROMETRY [LARGE SCALE ANALYSIS]</scope>
    <source>
        <tissue>Spleen</tissue>
    </source>
</reference>
<reference key="6">
    <citation type="journal article" date="2014" name="Mol. Cell. Proteomics">
        <title>Immunoaffinity enrichment and mass spectrometry analysis of protein methylation.</title>
        <authorList>
            <person name="Guo A."/>
            <person name="Gu H."/>
            <person name="Zhou J."/>
            <person name="Mulhern D."/>
            <person name="Wang Y."/>
            <person name="Lee K.A."/>
            <person name="Yang V."/>
            <person name="Aguiar M."/>
            <person name="Kornhauser J."/>
            <person name="Jia X."/>
            <person name="Ren J."/>
            <person name="Beausoleil S.A."/>
            <person name="Silva J.C."/>
            <person name="Vemulapalli V."/>
            <person name="Bedford M.T."/>
            <person name="Comb M.J."/>
        </authorList>
    </citation>
    <scope>METHYLATION [LARGE SCALE ANALYSIS] AT ARG-796</scope>
    <scope>IDENTIFICATION BY MASS SPECTROMETRY [LARGE SCALE ANALYSIS]</scope>
    <source>
        <tissue>Embryo</tissue>
    </source>
</reference>
<reference key="7">
    <citation type="journal article" date="2019" name="Am. J. Hum. Genet.">
        <title>Hypomorphic mutations in TONSL cause sponastrime dysplasia.</title>
        <authorList>
            <person name="Chang H.R."/>
            <person name="Cho S.Y."/>
            <person name="Lee J.H."/>
            <person name="Lee E."/>
            <person name="Seo J."/>
            <person name="Lee H.R."/>
            <person name="Cavalcanti D.P."/>
            <person name="Maekitie O."/>
            <person name="Valta H."/>
            <person name="Girisha K.M."/>
            <person name="Lee C."/>
            <person name="Neethukrishna K."/>
            <person name="Bhavani G.S."/>
            <person name="Shukla A."/>
            <person name="Nampoothiri S."/>
            <person name="Phadke S.R."/>
            <person name="Park M.J."/>
            <person name="Ikegawa S."/>
            <person name="Wang Z."/>
            <person name="Higgs M.R."/>
            <person name="Stewart G.S."/>
            <person name="Jung E."/>
            <person name="Lee M.S."/>
            <person name="Park J.H."/>
            <person name="Lee E.A."/>
            <person name="Kim H."/>
            <person name="Myung K."/>
            <person name="Jeon W."/>
            <person name="Lee K."/>
            <person name="Kim D."/>
            <person name="Kim O.H."/>
            <person name="Choi M."/>
            <person name="Lee H.W."/>
            <person name="Kim Y."/>
            <person name="Cho T.J."/>
        </authorList>
    </citation>
    <scope>MUTAGENESIS OF ARG-924</scope>
</reference>
<reference key="8">
    <citation type="journal article" date="2022" name="Science">
        <title>The histone H3.1 variant regulates TONSOKU-mediated DNA repair during replication.</title>
        <authorList>
            <person name="Davarinejad H."/>
            <person name="Huang Y.C."/>
            <person name="Mermaz B."/>
            <person name="LeBlanc C."/>
            <person name="Poulet A."/>
            <person name="Thomson G."/>
            <person name="Joly V."/>
            <person name="Munoz M."/>
            <person name="Arvanitis-Vigneault A."/>
            <person name="Valsakumar D."/>
            <person name="Villarino G."/>
            <person name="Ross A."/>
            <person name="Rotstein B.H."/>
            <person name="Alarcon E.I."/>
            <person name="Brunzelle J.S."/>
            <person name="Voigt P."/>
            <person name="Dong J."/>
            <person name="Couture J.F."/>
            <person name="Jacob Y."/>
        </authorList>
    </citation>
    <scope>INTERACTION WITH HISTONE H3.1</scope>
</reference>